<reference key="1">
    <citation type="journal article" date="2009" name="J. Bacteriol.">
        <title>Complete genome sequence of Erythrobacter litoralis HTCC2594.</title>
        <authorList>
            <person name="Oh H.M."/>
            <person name="Giovannoni S.J."/>
            <person name="Ferriera S."/>
            <person name="Johnson J."/>
            <person name="Cho J.C."/>
        </authorList>
    </citation>
    <scope>NUCLEOTIDE SEQUENCE [LARGE SCALE GENOMIC DNA]</scope>
    <source>
        <strain>HTCC2594</strain>
    </source>
</reference>
<protein>
    <recommendedName>
        <fullName evidence="1">Glutamate--tRNA ligase 1</fullName>
        <ecNumber evidence="1">6.1.1.17</ecNumber>
    </recommendedName>
    <alternativeName>
        <fullName evidence="1">Glutamyl-tRNA synthetase 1</fullName>
        <shortName evidence="1">GluRS 1</shortName>
    </alternativeName>
</protein>
<organism>
    <name type="scientific">Erythrobacter litoralis (strain HTCC2594)</name>
    <dbReference type="NCBI Taxonomy" id="314225"/>
    <lineage>
        <taxon>Bacteria</taxon>
        <taxon>Pseudomonadati</taxon>
        <taxon>Pseudomonadota</taxon>
        <taxon>Alphaproteobacteria</taxon>
        <taxon>Sphingomonadales</taxon>
        <taxon>Erythrobacteraceae</taxon>
        <taxon>Erythrobacter/Porphyrobacter group</taxon>
        <taxon>Erythrobacter</taxon>
    </lineage>
</organism>
<dbReference type="EC" id="6.1.1.17" evidence="1"/>
<dbReference type="EMBL" id="CP000157">
    <property type="protein sequence ID" value="ABC63400.1"/>
    <property type="status" value="ALT_INIT"/>
    <property type="molecule type" value="Genomic_DNA"/>
</dbReference>
<dbReference type="RefSeq" id="WP_041685155.1">
    <property type="nucleotide sequence ID" value="NC_007722.1"/>
</dbReference>
<dbReference type="SMR" id="Q2NA91"/>
<dbReference type="STRING" id="314225.ELI_06540"/>
<dbReference type="KEGG" id="eli:ELI_06540"/>
<dbReference type="eggNOG" id="COG0008">
    <property type="taxonomic scope" value="Bacteria"/>
</dbReference>
<dbReference type="HOGENOM" id="CLU_015768_6_0_5"/>
<dbReference type="OrthoDB" id="9807503at2"/>
<dbReference type="Proteomes" id="UP000008808">
    <property type="component" value="Chromosome"/>
</dbReference>
<dbReference type="GO" id="GO:0005829">
    <property type="term" value="C:cytosol"/>
    <property type="evidence" value="ECO:0007669"/>
    <property type="project" value="TreeGrafter"/>
</dbReference>
<dbReference type="GO" id="GO:0005524">
    <property type="term" value="F:ATP binding"/>
    <property type="evidence" value="ECO:0007669"/>
    <property type="project" value="UniProtKB-UniRule"/>
</dbReference>
<dbReference type="GO" id="GO:0004818">
    <property type="term" value="F:glutamate-tRNA ligase activity"/>
    <property type="evidence" value="ECO:0007669"/>
    <property type="project" value="UniProtKB-UniRule"/>
</dbReference>
<dbReference type="GO" id="GO:0000049">
    <property type="term" value="F:tRNA binding"/>
    <property type="evidence" value="ECO:0007669"/>
    <property type="project" value="InterPro"/>
</dbReference>
<dbReference type="GO" id="GO:0008270">
    <property type="term" value="F:zinc ion binding"/>
    <property type="evidence" value="ECO:0007669"/>
    <property type="project" value="InterPro"/>
</dbReference>
<dbReference type="GO" id="GO:0006424">
    <property type="term" value="P:glutamyl-tRNA aminoacylation"/>
    <property type="evidence" value="ECO:0007669"/>
    <property type="project" value="UniProtKB-UniRule"/>
</dbReference>
<dbReference type="CDD" id="cd00808">
    <property type="entry name" value="GluRS_core"/>
    <property type="match status" value="1"/>
</dbReference>
<dbReference type="FunFam" id="3.40.50.620:FF:000007">
    <property type="entry name" value="Glutamate--tRNA ligase"/>
    <property type="match status" value="1"/>
</dbReference>
<dbReference type="Gene3D" id="1.10.10.350">
    <property type="match status" value="1"/>
</dbReference>
<dbReference type="Gene3D" id="3.40.50.620">
    <property type="entry name" value="HUPs"/>
    <property type="match status" value="1"/>
</dbReference>
<dbReference type="HAMAP" id="MF_00022">
    <property type="entry name" value="Glu_tRNA_synth_type1"/>
    <property type="match status" value="1"/>
</dbReference>
<dbReference type="InterPro" id="IPR045462">
    <property type="entry name" value="aa-tRNA-synth_I_cd-bd"/>
</dbReference>
<dbReference type="InterPro" id="IPR020751">
    <property type="entry name" value="aa-tRNA-synth_I_codon-bd_sub2"/>
</dbReference>
<dbReference type="InterPro" id="IPR001412">
    <property type="entry name" value="aa-tRNA-synth_I_CS"/>
</dbReference>
<dbReference type="InterPro" id="IPR008925">
    <property type="entry name" value="aa_tRNA-synth_I_cd-bd_sf"/>
</dbReference>
<dbReference type="InterPro" id="IPR004527">
    <property type="entry name" value="Glu-tRNA-ligase_bac/mito"/>
</dbReference>
<dbReference type="InterPro" id="IPR000924">
    <property type="entry name" value="Glu/Gln-tRNA-synth"/>
</dbReference>
<dbReference type="InterPro" id="IPR020058">
    <property type="entry name" value="Glu/Gln-tRNA-synth_Ib_cat-dom"/>
</dbReference>
<dbReference type="InterPro" id="IPR049940">
    <property type="entry name" value="GluQ/Sye"/>
</dbReference>
<dbReference type="InterPro" id="IPR033910">
    <property type="entry name" value="GluRS_core"/>
</dbReference>
<dbReference type="InterPro" id="IPR014729">
    <property type="entry name" value="Rossmann-like_a/b/a_fold"/>
</dbReference>
<dbReference type="NCBIfam" id="TIGR00464">
    <property type="entry name" value="gltX_bact"/>
    <property type="match status" value="1"/>
</dbReference>
<dbReference type="PANTHER" id="PTHR43311">
    <property type="entry name" value="GLUTAMATE--TRNA LIGASE"/>
    <property type="match status" value="1"/>
</dbReference>
<dbReference type="PANTHER" id="PTHR43311:SF2">
    <property type="entry name" value="GLUTAMATE--TRNA LIGASE, MITOCHONDRIAL-RELATED"/>
    <property type="match status" value="1"/>
</dbReference>
<dbReference type="Pfam" id="PF19269">
    <property type="entry name" value="Anticodon_2"/>
    <property type="match status" value="1"/>
</dbReference>
<dbReference type="Pfam" id="PF00749">
    <property type="entry name" value="tRNA-synt_1c"/>
    <property type="match status" value="1"/>
</dbReference>
<dbReference type="PRINTS" id="PR00987">
    <property type="entry name" value="TRNASYNTHGLU"/>
</dbReference>
<dbReference type="SUPFAM" id="SSF48163">
    <property type="entry name" value="An anticodon-binding domain of class I aminoacyl-tRNA synthetases"/>
    <property type="match status" value="1"/>
</dbReference>
<dbReference type="SUPFAM" id="SSF52374">
    <property type="entry name" value="Nucleotidylyl transferase"/>
    <property type="match status" value="1"/>
</dbReference>
<dbReference type="PROSITE" id="PS00178">
    <property type="entry name" value="AA_TRNA_LIGASE_I"/>
    <property type="match status" value="1"/>
</dbReference>
<accession>Q2NA91</accession>
<gene>
    <name evidence="1" type="primary">gltX1</name>
    <name type="ordered locus">ELI_06540</name>
</gene>
<sequence>MASKDDAGTSNVVTRFAPSPTGYLHLGGARTALFNWLFARHYGGKALLRIEDTDKKRSTQDAIDKILEGLDWLGLDYDDTPLFQSERGSRHVEVAEKLLEYGYAYRCYATQEELEQMRAAQRAAKQPQRYDGRWRHRDASEAPAGSPFVVRLKTAEDGETTIEDKVQGRVTVRNEELDDYILLRADGSPTYMLAVVVDDHDMGVTHVIRGDDHLNNAFRQLPIYHAMDTIEGGWPEPVYAHVPLIHGQDGAKLSKRHGAVGVEAYRDEMGVLPEALFNYLLRLGWGHGDQEEFTREQAIELFTLEGVGKSASRFDTKKLLNLNGHHIREADNARLAALVAAKIGPAADEALLTQAMEVLKVRAKDINELAEGAAFLFSKRPLEMTEKAEKLLDGEGRERLAKVSEALSAENDWTIEALEATTKALAERLELGLGKLAQPMRAALTGTTTSPGIFDVLVLLGREESLARIDAQATPAEEGANG</sequence>
<name>SYE1_ERYLH</name>
<comment type="function">
    <text evidence="1">Catalyzes the attachment of glutamate to tRNA(Glu) in a two-step reaction: glutamate is first activated by ATP to form Glu-AMP and then transferred to the acceptor end of tRNA(Glu).</text>
</comment>
<comment type="catalytic activity">
    <reaction evidence="1">
        <text>tRNA(Glu) + L-glutamate + ATP = L-glutamyl-tRNA(Glu) + AMP + diphosphate</text>
        <dbReference type="Rhea" id="RHEA:23540"/>
        <dbReference type="Rhea" id="RHEA-COMP:9663"/>
        <dbReference type="Rhea" id="RHEA-COMP:9680"/>
        <dbReference type="ChEBI" id="CHEBI:29985"/>
        <dbReference type="ChEBI" id="CHEBI:30616"/>
        <dbReference type="ChEBI" id="CHEBI:33019"/>
        <dbReference type="ChEBI" id="CHEBI:78442"/>
        <dbReference type="ChEBI" id="CHEBI:78520"/>
        <dbReference type="ChEBI" id="CHEBI:456215"/>
        <dbReference type="EC" id="6.1.1.17"/>
    </reaction>
</comment>
<comment type="subunit">
    <text evidence="1">Monomer.</text>
</comment>
<comment type="subcellular location">
    <subcellularLocation>
        <location evidence="1">Cytoplasm</location>
    </subcellularLocation>
</comment>
<comment type="similarity">
    <text evidence="1">Belongs to the class-I aminoacyl-tRNA synthetase family. Glutamate--tRNA ligase type 1 subfamily.</text>
</comment>
<comment type="sequence caution" evidence="2">
    <conflict type="erroneous initiation">
        <sequence resource="EMBL-CDS" id="ABC63400"/>
    </conflict>
</comment>
<feature type="chain" id="PRO_0000367668" description="Glutamate--tRNA ligase 1">
    <location>
        <begin position="1"/>
        <end position="482"/>
    </location>
</feature>
<feature type="short sequence motif" description="'HIGH' region" evidence="1">
    <location>
        <begin position="18"/>
        <end position="28"/>
    </location>
</feature>
<feature type="short sequence motif" description="'KMSKS' region" evidence="1">
    <location>
        <begin position="252"/>
        <end position="256"/>
    </location>
</feature>
<feature type="binding site" evidence="1">
    <location>
        <position position="255"/>
    </location>
    <ligand>
        <name>ATP</name>
        <dbReference type="ChEBI" id="CHEBI:30616"/>
    </ligand>
</feature>
<keyword id="KW-0030">Aminoacyl-tRNA synthetase</keyword>
<keyword id="KW-0067">ATP-binding</keyword>
<keyword id="KW-0963">Cytoplasm</keyword>
<keyword id="KW-0436">Ligase</keyword>
<keyword id="KW-0547">Nucleotide-binding</keyword>
<keyword id="KW-0648">Protein biosynthesis</keyword>
<keyword id="KW-1185">Reference proteome</keyword>
<evidence type="ECO:0000255" key="1">
    <source>
        <dbReference type="HAMAP-Rule" id="MF_00022"/>
    </source>
</evidence>
<evidence type="ECO:0000305" key="2"/>
<proteinExistence type="inferred from homology"/>